<accession>A3D7T4</accession>
<name>DNAK_SHEB5</name>
<evidence type="ECO:0000255" key="1">
    <source>
        <dbReference type="HAMAP-Rule" id="MF_00332"/>
    </source>
</evidence>
<evidence type="ECO:0000256" key="2">
    <source>
        <dbReference type="SAM" id="MobiDB-lite"/>
    </source>
</evidence>
<sequence length="639" mass="68974">MGKIIGIDLGTTNSCVAVLDGGKARVLENAEGDRTTPSIIAYTDDETIVGSPAKRQAVTNPTNTFFAIKRLIGRRFKDDEVQRDVNIMPFKIIAADNGDAWVESRGNKMAPPQVSAEILKKMKKTAEDFLGEEVTEAVITVPAYFNDSQRQATKDAGRIAGLDVKRIINEPTAAALAYGIDKKQGDNIVAVYDLGGGTFDISIIEIDSNDGDQTFEVLATNGDTHLGGEDFDNRLINYLADEFKKEQGLDLRKDPLAMQRLKEAAEKAKIELSSTNHTEVNLPYITADATGPKHLVIKITRAKLESLVEDLILRTLEPLKVALADADLSVTDINEVILVGGQTRMPKVQEAVTNFFGKEPRKDVNPDEAVAVGAAIQAGVLSGDVKDVLLLDVTPLSLGIETMGSVMTKLIEKNTTIPTKAQQVFSTADDNQSAVTIHVLQGERKQASANKSLGQFNLDGIEPAQRGQPQIEVMFDIDADGILHVSATDKKTGKKQNITIKASSGLSEEEVAQMVRDAEAHADEDKKFEELVQSRNQADGLVHATKKQVEEAGDALPSEDKEKIQAAMDAVDTAIKGNDKEAIEKATQELIEASAKLMEIAQAKSQAQGGDNADAGKQANATADDVVDAEFEEVKDDKK</sequence>
<feature type="chain" id="PRO_1000059659" description="Chaperone protein DnaK">
    <location>
        <begin position="1"/>
        <end position="639"/>
    </location>
</feature>
<feature type="region of interest" description="Disordered" evidence="2">
    <location>
        <begin position="602"/>
        <end position="639"/>
    </location>
</feature>
<feature type="compositionally biased region" description="Acidic residues" evidence="2">
    <location>
        <begin position="625"/>
        <end position="639"/>
    </location>
</feature>
<feature type="modified residue" description="Phosphothreonine; by autocatalysis" evidence="1">
    <location>
        <position position="198"/>
    </location>
</feature>
<proteinExistence type="inferred from homology"/>
<comment type="function">
    <text evidence="1">Acts as a chaperone.</text>
</comment>
<comment type="induction">
    <text evidence="1">By stress conditions e.g. heat shock.</text>
</comment>
<comment type="similarity">
    <text evidence="1">Belongs to the heat shock protein 70 family.</text>
</comment>
<dbReference type="EMBL" id="CP000563">
    <property type="protein sequence ID" value="ABN62797.1"/>
    <property type="molecule type" value="Genomic_DNA"/>
</dbReference>
<dbReference type="RefSeq" id="WP_011847566.1">
    <property type="nucleotide sequence ID" value="NC_009052.1"/>
</dbReference>
<dbReference type="SMR" id="A3D7T4"/>
<dbReference type="STRING" id="325240.Sbal_3319"/>
<dbReference type="KEGG" id="sbl:Sbal_3319"/>
<dbReference type="HOGENOM" id="CLU_005965_2_1_6"/>
<dbReference type="OrthoDB" id="9766019at2"/>
<dbReference type="Proteomes" id="UP000001557">
    <property type="component" value="Chromosome"/>
</dbReference>
<dbReference type="GO" id="GO:0005524">
    <property type="term" value="F:ATP binding"/>
    <property type="evidence" value="ECO:0007669"/>
    <property type="project" value="UniProtKB-UniRule"/>
</dbReference>
<dbReference type="GO" id="GO:0140662">
    <property type="term" value="F:ATP-dependent protein folding chaperone"/>
    <property type="evidence" value="ECO:0007669"/>
    <property type="project" value="InterPro"/>
</dbReference>
<dbReference type="GO" id="GO:0051082">
    <property type="term" value="F:unfolded protein binding"/>
    <property type="evidence" value="ECO:0007669"/>
    <property type="project" value="InterPro"/>
</dbReference>
<dbReference type="CDD" id="cd10234">
    <property type="entry name" value="ASKHA_NBD_HSP70_DnaK-like"/>
    <property type="match status" value="1"/>
</dbReference>
<dbReference type="FunFam" id="2.60.34.10:FF:000014">
    <property type="entry name" value="Chaperone protein DnaK HSP70"/>
    <property type="match status" value="1"/>
</dbReference>
<dbReference type="FunFam" id="1.20.1270.10:FF:000001">
    <property type="entry name" value="Molecular chaperone DnaK"/>
    <property type="match status" value="1"/>
</dbReference>
<dbReference type="FunFam" id="3.30.420.40:FF:000004">
    <property type="entry name" value="Molecular chaperone DnaK"/>
    <property type="match status" value="1"/>
</dbReference>
<dbReference type="FunFam" id="3.90.640.10:FF:000003">
    <property type="entry name" value="Molecular chaperone DnaK"/>
    <property type="match status" value="1"/>
</dbReference>
<dbReference type="Gene3D" id="1.20.1270.10">
    <property type="match status" value="1"/>
</dbReference>
<dbReference type="Gene3D" id="3.30.420.40">
    <property type="match status" value="2"/>
</dbReference>
<dbReference type="Gene3D" id="3.90.640.10">
    <property type="entry name" value="Actin, Chain A, domain 4"/>
    <property type="match status" value="1"/>
</dbReference>
<dbReference type="Gene3D" id="2.60.34.10">
    <property type="entry name" value="Substrate Binding Domain Of DNAk, Chain A, domain 1"/>
    <property type="match status" value="1"/>
</dbReference>
<dbReference type="HAMAP" id="MF_00332">
    <property type="entry name" value="DnaK"/>
    <property type="match status" value="1"/>
</dbReference>
<dbReference type="InterPro" id="IPR043129">
    <property type="entry name" value="ATPase_NBD"/>
</dbReference>
<dbReference type="InterPro" id="IPR012725">
    <property type="entry name" value="Chaperone_DnaK"/>
</dbReference>
<dbReference type="InterPro" id="IPR018181">
    <property type="entry name" value="Heat_shock_70_CS"/>
</dbReference>
<dbReference type="InterPro" id="IPR029048">
    <property type="entry name" value="HSP70_C_sf"/>
</dbReference>
<dbReference type="InterPro" id="IPR029047">
    <property type="entry name" value="HSP70_peptide-bd_sf"/>
</dbReference>
<dbReference type="InterPro" id="IPR013126">
    <property type="entry name" value="Hsp_70_fam"/>
</dbReference>
<dbReference type="NCBIfam" id="NF001413">
    <property type="entry name" value="PRK00290.1"/>
    <property type="match status" value="1"/>
</dbReference>
<dbReference type="NCBIfam" id="NF003520">
    <property type="entry name" value="PRK05183.1"/>
    <property type="match status" value="1"/>
</dbReference>
<dbReference type="NCBIfam" id="TIGR02350">
    <property type="entry name" value="prok_dnaK"/>
    <property type="match status" value="1"/>
</dbReference>
<dbReference type="PANTHER" id="PTHR19375">
    <property type="entry name" value="HEAT SHOCK PROTEIN 70KDA"/>
    <property type="match status" value="1"/>
</dbReference>
<dbReference type="Pfam" id="PF00012">
    <property type="entry name" value="HSP70"/>
    <property type="match status" value="1"/>
</dbReference>
<dbReference type="PRINTS" id="PR00301">
    <property type="entry name" value="HEATSHOCK70"/>
</dbReference>
<dbReference type="SUPFAM" id="SSF53067">
    <property type="entry name" value="Actin-like ATPase domain"/>
    <property type="match status" value="2"/>
</dbReference>
<dbReference type="SUPFAM" id="SSF100920">
    <property type="entry name" value="Heat shock protein 70kD (HSP70), peptide-binding domain"/>
    <property type="match status" value="1"/>
</dbReference>
<dbReference type="PROSITE" id="PS00297">
    <property type="entry name" value="HSP70_1"/>
    <property type="match status" value="1"/>
</dbReference>
<dbReference type="PROSITE" id="PS00329">
    <property type="entry name" value="HSP70_2"/>
    <property type="match status" value="1"/>
</dbReference>
<dbReference type="PROSITE" id="PS01036">
    <property type="entry name" value="HSP70_3"/>
    <property type="match status" value="1"/>
</dbReference>
<reference key="1">
    <citation type="submission" date="2007-02" db="EMBL/GenBank/DDBJ databases">
        <title>Complete sequence of chromosome of Shewanella baltica OS155.</title>
        <authorList>
            <consortium name="US DOE Joint Genome Institute"/>
            <person name="Copeland A."/>
            <person name="Lucas S."/>
            <person name="Lapidus A."/>
            <person name="Barry K."/>
            <person name="Detter J.C."/>
            <person name="Glavina del Rio T."/>
            <person name="Hammon N."/>
            <person name="Israni S."/>
            <person name="Dalin E."/>
            <person name="Tice H."/>
            <person name="Pitluck S."/>
            <person name="Sims D.R."/>
            <person name="Brettin T."/>
            <person name="Bruce D."/>
            <person name="Han C."/>
            <person name="Tapia R."/>
            <person name="Brainard J."/>
            <person name="Schmutz J."/>
            <person name="Larimer F."/>
            <person name="Land M."/>
            <person name="Hauser L."/>
            <person name="Kyrpides N."/>
            <person name="Mikhailova N."/>
            <person name="Brettar I."/>
            <person name="Klappenbach J."/>
            <person name="Konstantinidis K."/>
            <person name="Rodrigues J."/>
            <person name="Tiedje J."/>
            <person name="Richardson P."/>
        </authorList>
    </citation>
    <scope>NUCLEOTIDE SEQUENCE [LARGE SCALE GENOMIC DNA]</scope>
    <source>
        <strain>OS155 / ATCC BAA-1091</strain>
    </source>
</reference>
<protein>
    <recommendedName>
        <fullName evidence="1">Chaperone protein DnaK</fullName>
    </recommendedName>
    <alternativeName>
        <fullName evidence="1">HSP70</fullName>
    </alternativeName>
    <alternativeName>
        <fullName evidence="1">Heat shock 70 kDa protein</fullName>
    </alternativeName>
    <alternativeName>
        <fullName evidence="1">Heat shock protein 70</fullName>
    </alternativeName>
</protein>
<organism>
    <name type="scientific">Shewanella baltica (strain OS155 / ATCC BAA-1091)</name>
    <dbReference type="NCBI Taxonomy" id="325240"/>
    <lineage>
        <taxon>Bacteria</taxon>
        <taxon>Pseudomonadati</taxon>
        <taxon>Pseudomonadota</taxon>
        <taxon>Gammaproteobacteria</taxon>
        <taxon>Alteromonadales</taxon>
        <taxon>Shewanellaceae</taxon>
        <taxon>Shewanella</taxon>
    </lineage>
</organism>
<keyword id="KW-0067">ATP-binding</keyword>
<keyword id="KW-0143">Chaperone</keyword>
<keyword id="KW-0547">Nucleotide-binding</keyword>
<keyword id="KW-0597">Phosphoprotein</keyword>
<keyword id="KW-1185">Reference proteome</keyword>
<keyword id="KW-0346">Stress response</keyword>
<gene>
    <name evidence="1" type="primary">dnaK</name>
    <name type="ordered locus">Sbal_3319</name>
</gene>